<name>GLYA_ACIC1</name>
<dbReference type="EC" id="2.1.2.1" evidence="1"/>
<dbReference type="EMBL" id="CP000481">
    <property type="protein sequence ID" value="ABK53309.1"/>
    <property type="molecule type" value="Genomic_DNA"/>
</dbReference>
<dbReference type="RefSeq" id="WP_011720372.1">
    <property type="nucleotide sequence ID" value="NC_008578.1"/>
</dbReference>
<dbReference type="SMR" id="A0LV49"/>
<dbReference type="FunCoup" id="A0LV49">
    <property type="interactions" value="432"/>
</dbReference>
<dbReference type="STRING" id="351607.Acel_1537"/>
<dbReference type="KEGG" id="ace:Acel_1537"/>
<dbReference type="eggNOG" id="COG0112">
    <property type="taxonomic scope" value="Bacteria"/>
</dbReference>
<dbReference type="HOGENOM" id="CLU_022477_2_1_11"/>
<dbReference type="InParanoid" id="A0LV49"/>
<dbReference type="OrthoDB" id="9803846at2"/>
<dbReference type="UniPathway" id="UPA00193"/>
<dbReference type="UniPathway" id="UPA00288">
    <property type="reaction ID" value="UER01023"/>
</dbReference>
<dbReference type="Proteomes" id="UP000008221">
    <property type="component" value="Chromosome"/>
</dbReference>
<dbReference type="GO" id="GO:0005829">
    <property type="term" value="C:cytosol"/>
    <property type="evidence" value="ECO:0007669"/>
    <property type="project" value="TreeGrafter"/>
</dbReference>
<dbReference type="GO" id="GO:0004372">
    <property type="term" value="F:glycine hydroxymethyltransferase activity"/>
    <property type="evidence" value="ECO:0007669"/>
    <property type="project" value="UniProtKB-UniRule"/>
</dbReference>
<dbReference type="GO" id="GO:0030170">
    <property type="term" value="F:pyridoxal phosphate binding"/>
    <property type="evidence" value="ECO:0007669"/>
    <property type="project" value="UniProtKB-UniRule"/>
</dbReference>
<dbReference type="GO" id="GO:0019264">
    <property type="term" value="P:glycine biosynthetic process from serine"/>
    <property type="evidence" value="ECO:0007669"/>
    <property type="project" value="UniProtKB-UniRule"/>
</dbReference>
<dbReference type="GO" id="GO:0035999">
    <property type="term" value="P:tetrahydrofolate interconversion"/>
    <property type="evidence" value="ECO:0007669"/>
    <property type="project" value="UniProtKB-UniRule"/>
</dbReference>
<dbReference type="CDD" id="cd00378">
    <property type="entry name" value="SHMT"/>
    <property type="match status" value="1"/>
</dbReference>
<dbReference type="FunFam" id="3.40.640.10:FF:000001">
    <property type="entry name" value="Serine hydroxymethyltransferase"/>
    <property type="match status" value="1"/>
</dbReference>
<dbReference type="Gene3D" id="3.90.1150.10">
    <property type="entry name" value="Aspartate Aminotransferase, domain 1"/>
    <property type="match status" value="1"/>
</dbReference>
<dbReference type="Gene3D" id="3.40.640.10">
    <property type="entry name" value="Type I PLP-dependent aspartate aminotransferase-like (Major domain)"/>
    <property type="match status" value="1"/>
</dbReference>
<dbReference type="HAMAP" id="MF_00051">
    <property type="entry name" value="SHMT"/>
    <property type="match status" value="1"/>
</dbReference>
<dbReference type="InterPro" id="IPR015424">
    <property type="entry name" value="PyrdxlP-dep_Trfase"/>
</dbReference>
<dbReference type="InterPro" id="IPR015421">
    <property type="entry name" value="PyrdxlP-dep_Trfase_major"/>
</dbReference>
<dbReference type="InterPro" id="IPR015422">
    <property type="entry name" value="PyrdxlP-dep_Trfase_small"/>
</dbReference>
<dbReference type="InterPro" id="IPR001085">
    <property type="entry name" value="Ser_HO-MeTrfase"/>
</dbReference>
<dbReference type="InterPro" id="IPR049943">
    <property type="entry name" value="Ser_HO-MeTrfase-like"/>
</dbReference>
<dbReference type="InterPro" id="IPR019798">
    <property type="entry name" value="Ser_HO-MeTrfase_PLP_BS"/>
</dbReference>
<dbReference type="InterPro" id="IPR039429">
    <property type="entry name" value="SHMT-like_dom"/>
</dbReference>
<dbReference type="NCBIfam" id="NF000586">
    <property type="entry name" value="PRK00011.1"/>
    <property type="match status" value="1"/>
</dbReference>
<dbReference type="PANTHER" id="PTHR11680">
    <property type="entry name" value="SERINE HYDROXYMETHYLTRANSFERASE"/>
    <property type="match status" value="1"/>
</dbReference>
<dbReference type="PANTHER" id="PTHR11680:SF50">
    <property type="entry name" value="SERINE HYDROXYMETHYLTRANSFERASE"/>
    <property type="match status" value="1"/>
</dbReference>
<dbReference type="Pfam" id="PF00464">
    <property type="entry name" value="SHMT"/>
    <property type="match status" value="1"/>
</dbReference>
<dbReference type="PIRSF" id="PIRSF000412">
    <property type="entry name" value="SHMT"/>
    <property type="match status" value="1"/>
</dbReference>
<dbReference type="SUPFAM" id="SSF53383">
    <property type="entry name" value="PLP-dependent transferases"/>
    <property type="match status" value="1"/>
</dbReference>
<dbReference type="PROSITE" id="PS00096">
    <property type="entry name" value="SHMT"/>
    <property type="match status" value="1"/>
</dbReference>
<sequence>MNSSPDPLAALTATDPTIADLIRAEERRQSEKIRLIPSENYVSKAVLEATGTVLTNKYSEGYPNRRYYEGQQFIDQIETIAIERAKQLFGVDHANVQPYSGSPANLAIYLALLSPGDTVMGMALPMGGHLTHGWPVSATGIWFRSVQYGVRRDTGRIDFDEVREVARRERPKVIFAGGTAIPRIIDFAAFAEIAREVNAVLVADIAHISGLVAGGVHPSPVGHADIISTTTHKTLRGPRGAMLMSTEQYAKALDKAVFPGLQGGPHNHTTAAIAVALLEAMQPEFRDYARNIVANAAVLAEELLARGFDLVSGGTDNHLILVDLTSKGVAGKPVARALDRAGIELNYNTVPFDPRKPFDPSGIRLGTPAVTSRGMGPAEMRQIAAWIDEVTTAVAKGDEEALAAVEQRVAGEVRELTKNFPTPGLDR</sequence>
<protein>
    <recommendedName>
        <fullName evidence="1">Serine hydroxymethyltransferase</fullName>
        <shortName evidence="1">SHMT</shortName>
        <shortName evidence="1">Serine methylase</shortName>
        <ecNumber evidence="1">2.1.2.1</ecNumber>
    </recommendedName>
</protein>
<comment type="function">
    <text evidence="1">Catalyzes the reversible interconversion of serine and glycine with tetrahydrofolate (THF) serving as the one-carbon carrier. This reaction serves as the major source of one-carbon groups required for the biosynthesis of purines, thymidylate, methionine, and other important biomolecules. Also exhibits THF-independent aldolase activity toward beta-hydroxyamino acids, producing glycine and aldehydes, via a retro-aldol mechanism.</text>
</comment>
<comment type="catalytic activity">
    <reaction evidence="1">
        <text>(6R)-5,10-methylene-5,6,7,8-tetrahydrofolate + glycine + H2O = (6S)-5,6,7,8-tetrahydrofolate + L-serine</text>
        <dbReference type="Rhea" id="RHEA:15481"/>
        <dbReference type="ChEBI" id="CHEBI:15377"/>
        <dbReference type="ChEBI" id="CHEBI:15636"/>
        <dbReference type="ChEBI" id="CHEBI:33384"/>
        <dbReference type="ChEBI" id="CHEBI:57305"/>
        <dbReference type="ChEBI" id="CHEBI:57453"/>
        <dbReference type="EC" id="2.1.2.1"/>
    </reaction>
</comment>
<comment type="cofactor">
    <cofactor evidence="1">
        <name>pyridoxal 5'-phosphate</name>
        <dbReference type="ChEBI" id="CHEBI:597326"/>
    </cofactor>
</comment>
<comment type="pathway">
    <text evidence="1">One-carbon metabolism; tetrahydrofolate interconversion.</text>
</comment>
<comment type="pathway">
    <text evidence="1">Amino-acid biosynthesis; glycine biosynthesis; glycine from L-serine: step 1/1.</text>
</comment>
<comment type="subunit">
    <text evidence="1">Homodimer.</text>
</comment>
<comment type="subcellular location">
    <subcellularLocation>
        <location evidence="1">Cytoplasm</location>
    </subcellularLocation>
</comment>
<comment type="similarity">
    <text evidence="1">Belongs to the SHMT family.</text>
</comment>
<proteinExistence type="inferred from homology"/>
<accession>A0LV49</accession>
<evidence type="ECO:0000255" key="1">
    <source>
        <dbReference type="HAMAP-Rule" id="MF_00051"/>
    </source>
</evidence>
<keyword id="KW-0028">Amino-acid biosynthesis</keyword>
<keyword id="KW-0963">Cytoplasm</keyword>
<keyword id="KW-0554">One-carbon metabolism</keyword>
<keyword id="KW-0663">Pyridoxal phosphate</keyword>
<keyword id="KW-1185">Reference proteome</keyword>
<keyword id="KW-0808">Transferase</keyword>
<organism>
    <name type="scientific">Acidothermus cellulolyticus (strain ATCC 43068 / DSM 8971 / 11B)</name>
    <dbReference type="NCBI Taxonomy" id="351607"/>
    <lineage>
        <taxon>Bacteria</taxon>
        <taxon>Bacillati</taxon>
        <taxon>Actinomycetota</taxon>
        <taxon>Actinomycetes</taxon>
        <taxon>Acidothermales</taxon>
        <taxon>Acidothermaceae</taxon>
        <taxon>Acidothermus</taxon>
    </lineage>
</organism>
<gene>
    <name evidence="1" type="primary">glyA</name>
    <name type="ordered locus">Acel_1537</name>
</gene>
<feature type="chain" id="PRO_0000369897" description="Serine hydroxymethyltransferase">
    <location>
        <begin position="1"/>
        <end position="427"/>
    </location>
</feature>
<feature type="binding site" evidence="1">
    <location>
        <position position="124"/>
    </location>
    <ligand>
        <name>(6S)-5,6,7,8-tetrahydrofolate</name>
        <dbReference type="ChEBI" id="CHEBI:57453"/>
    </ligand>
</feature>
<feature type="binding site" evidence="1">
    <location>
        <begin position="128"/>
        <end position="130"/>
    </location>
    <ligand>
        <name>(6S)-5,6,7,8-tetrahydrofolate</name>
        <dbReference type="ChEBI" id="CHEBI:57453"/>
    </ligand>
</feature>
<feature type="site" description="Plays an important role in substrate specificity" evidence="1">
    <location>
        <position position="232"/>
    </location>
</feature>
<feature type="modified residue" description="N6-(pyridoxal phosphate)lysine" evidence="1">
    <location>
        <position position="233"/>
    </location>
</feature>
<reference key="1">
    <citation type="journal article" date="2009" name="Genome Res.">
        <title>Complete genome of the cellulolytic thermophile Acidothermus cellulolyticus 11B provides insights into its ecophysiological and evolutionary adaptations.</title>
        <authorList>
            <person name="Barabote R.D."/>
            <person name="Xie G."/>
            <person name="Leu D.H."/>
            <person name="Normand P."/>
            <person name="Necsulea A."/>
            <person name="Daubin V."/>
            <person name="Medigue C."/>
            <person name="Adney W.S."/>
            <person name="Xu X.C."/>
            <person name="Lapidus A."/>
            <person name="Parales R.E."/>
            <person name="Detter C."/>
            <person name="Pujic P."/>
            <person name="Bruce D."/>
            <person name="Lavire C."/>
            <person name="Challacombe J.F."/>
            <person name="Brettin T.S."/>
            <person name="Berry A.M."/>
        </authorList>
    </citation>
    <scope>NUCLEOTIDE SEQUENCE [LARGE SCALE GENOMIC DNA]</scope>
    <source>
        <strain>ATCC 43068 / DSM 8971 / 11B</strain>
    </source>
</reference>